<protein>
    <recommendedName>
        <fullName>F-box protein PP2-A15</fullName>
    </recommendedName>
    <alternativeName>
        <fullName>Protein PHLOEM PROTEIN 2-LIKE A15</fullName>
        <shortName>AtPP2-A15</shortName>
    </alternativeName>
</protein>
<name>P2A15_ARATH</name>
<gene>
    <name type="primary">PP2A15</name>
    <name type="ordered locus">At3g53000</name>
    <name type="ORF">F8J2.170</name>
</gene>
<comment type="sequence caution" evidence="2">
    <conflict type="frameshift">
        <sequence resource="EMBL" id="BX823868"/>
    </conflict>
</comment>
<evidence type="ECO:0000255" key="1">
    <source>
        <dbReference type="PROSITE-ProRule" id="PRU00080"/>
    </source>
</evidence>
<evidence type="ECO:0000305" key="2"/>
<feature type="chain" id="PRO_0000272210" description="F-box protein PP2-A15">
    <location>
        <begin position="1"/>
        <end position="300"/>
    </location>
</feature>
<feature type="domain" description="F-box" evidence="1">
    <location>
        <begin position="17"/>
        <end position="63"/>
    </location>
</feature>
<feature type="sequence conflict" description="In Ref. 3; BX823868." evidence="2" ref="3">
    <original>N</original>
    <variation>D</variation>
    <location>
        <position position="43"/>
    </location>
</feature>
<feature type="sequence conflict" description="In Ref. 3; BX823868." evidence="2" ref="3">
    <original>K</original>
    <variation>E</variation>
    <location>
        <position position="104"/>
    </location>
</feature>
<sequence>MGSSLSNLNDGTNGLAMGPGLGDIPESCVACVFMYLTPPEICNLAGLNRSFRGAASSDSVWEKKLPENYQDLLDLLPPERYHSLSKKDIFAVLSRPIPFDDDNKEVWIDRVTGRVCMAISARGMSITGIEDRRYWNWIPTEESRFHVVAYLQQIWWFEVDGTVRFHLPPGVYSLSFRIHLGRFTKRLGRRVCHFELTHGWDLKPVRFSLSTSDGQEASCEYYLDDVERNEALGKHKRGYWIEYRVGEFIVNGSEPSTEIQWSMKQIDCTHSKGGLCVDSVFINPIGDVKEHKRKAVLKEA</sequence>
<keyword id="KW-1185">Reference proteome</keyword>
<organism>
    <name type="scientific">Arabidopsis thaliana</name>
    <name type="common">Mouse-ear cress</name>
    <dbReference type="NCBI Taxonomy" id="3702"/>
    <lineage>
        <taxon>Eukaryota</taxon>
        <taxon>Viridiplantae</taxon>
        <taxon>Streptophyta</taxon>
        <taxon>Embryophyta</taxon>
        <taxon>Tracheophyta</taxon>
        <taxon>Spermatophyta</taxon>
        <taxon>Magnoliopsida</taxon>
        <taxon>eudicotyledons</taxon>
        <taxon>Gunneridae</taxon>
        <taxon>Pentapetalae</taxon>
        <taxon>rosids</taxon>
        <taxon>malvids</taxon>
        <taxon>Brassicales</taxon>
        <taxon>Brassicaceae</taxon>
        <taxon>Camelineae</taxon>
        <taxon>Arabidopsis</taxon>
    </lineage>
</organism>
<accession>Q9LF92</accession>
<proteinExistence type="evidence at transcript level"/>
<reference key="1">
    <citation type="journal article" date="2000" name="Nature">
        <title>Sequence and analysis of chromosome 3 of the plant Arabidopsis thaliana.</title>
        <authorList>
            <person name="Salanoubat M."/>
            <person name="Lemcke K."/>
            <person name="Rieger M."/>
            <person name="Ansorge W."/>
            <person name="Unseld M."/>
            <person name="Fartmann B."/>
            <person name="Valle G."/>
            <person name="Bloecker H."/>
            <person name="Perez-Alonso M."/>
            <person name="Obermaier B."/>
            <person name="Delseny M."/>
            <person name="Boutry M."/>
            <person name="Grivell L.A."/>
            <person name="Mache R."/>
            <person name="Puigdomenech P."/>
            <person name="De Simone V."/>
            <person name="Choisne N."/>
            <person name="Artiguenave F."/>
            <person name="Robert C."/>
            <person name="Brottier P."/>
            <person name="Wincker P."/>
            <person name="Cattolico L."/>
            <person name="Weissenbach J."/>
            <person name="Saurin W."/>
            <person name="Quetier F."/>
            <person name="Schaefer M."/>
            <person name="Mueller-Auer S."/>
            <person name="Gabel C."/>
            <person name="Fuchs M."/>
            <person name="Benes V."/>
            <person name="Wurmbach E."/>
            <person name="Drzonek H."/>
            <person name="Erfle H."/>
            <person name="Jordan N."/>
            <person name="Bangert S."/>
            <person name="Wiedelmann R."/>
            <person name="Kranz H."/>
            <person name="Voss H."/>
            <person name="Holland R."/>
            <person name="Brandt P."/>
            <person name="Nyakatura G."/>
            <person name="Vezzi A."/>
            <person name="D'Angelo M."/>
            <person name="Pallavicini A."/>
            <person name="Toppo S."/>
            <person name="Simionati B."/>
            <person name="Conrad A."/>
            <person name="Hornischer K."/>
            <person name="Kauer G."/>
            <person name="Loehnert T.-H."/>
            <person name="Nordsiek G."/>
            <person name="Reichelt J."/>
            <person name="Scharfe M."/>
            <person name="Schoen O."/>
            <person name="Bargues M."/>
            <person name="Terol J."/>
            <person name="Climent J."/>
            <person name="Navarro P."/>
            <person name="Collado C."/>
            <person name="Perez-Perez A."/>
            <person name="Ottenwaelder B."/>
            <person name="Duchemin D."/>
            <person name="Cooke R."/>
            <person name="Laudie M."/>
            <person name="Berger-Llauro C."/>
            <person name="Purnelle B."/>
            <person name="Masuy D."/>
            <person name="de Haan M."/>
            <person name="Maarse A.C."/>
            <person name="Alcaraz J.-P."/>
            <person name="Cottet A."/>
            <person name="Casacuberta E."/>
            <person name="Monfort A."/>
            <person name="Argiriou A."/>
            <person name="Flores M."/>
            <person name="Liguori R."/>
            <person name="Vitale D."/>
            <person name="Mannhaupt G."/>
            <person name="Haase D."/>
            <person name="Schoof H."/>
            <person name="Rudd S."/>
            <person name="Zaccaria P."/>
            <person name="Mewes H.-W."/>
            <person name="Mayer K.F.X."/>
            <person name="Kaul S."/>
            <person name="Town C.D."/>
            <person name="Koo H.L."/>
            <person name="Tallon L.J."/>
            <person name="Jenkins J."/>
            <person name="Rooney T."/>
            <person name="Rizzo M."/>
            <person name="Walts A."/>
            <person name="Utterback T."/>
            <person name="Fujii C.Y."/>
            <person name="Shea T.P."/>
            <person name="Creasy T.H."/>
            <person name="Haas B."/>
            <person name="Maiti R."/>
            <person name="Wu D."/>
            <person name="Peterson J."/>
            <person name="Van Aken S."/>
            <person name="Pai G."/>
            <person name="Militscher J."/>
            <person name="Sellers P."/>
            <person name="Gill J.E."/>
            <person name="Feldblyum T.V."/>
            <person name="Preuss D."/>
            <person name="Lin X."/>
            <person name="Nierman W.C."/>
            <person name="Salzberg S.L."/>
            <person name="White O."/>
            <person name="Venter J.C."/>
            <person name="Fraser C.M."/>
            <person name="Kaneko T."/>
            <person name="Nakamura Y."/>
            <person name="Sato S."/>
            <person name="Kato T."/>
            <person name="Asamizu E."/>
            <person name="Sasamoto S."/>
            <person name="Kimura T."/>
            <person name="Idesawa K."/>
            <person name="Kawashima K."/>
            <person name="Kishida Y."/>
            <person name="Kiyokawa C."/>
            <person name="Kohara M."/>
            <person name="Matsumoto M."/>
            <person name="Matsuno A."/>
            <person name="Muraki A."/>
            <person name="Nakayama S."/>
            <person name="Nakazaki N."/>
            <person name="Shinpo S."/>
            <person name="Takeuchi C."/>
            <person name="Wada T."/>
            <person name="Watanabe A."/>
            <person name="Yamada M."/>
            <person name="Yasuda M."/>
            <person name="Tabata S."/>
        </authorList>
    </citation>
    <scope>NUCLEOTIDE SEQUENCE [LARGE SCALE GENOMIC DNA]</scope>
    <source>
        <strain>cv. Columbia</strain>
    </source>
</reference>
<reference key="2">
    <citation type="journal article" date="2017" name="Plant J.">
        <title>Araport11: a complete reannotation of the Arabidopsis thaliana reference genome.</title>
        <authorList>
            <person name="Cheng C.Y."/>
            <person name="Krishnakumar V."/>
            <person name="Chan A.P."/>
            <person name="Thibaud-Nissen F."/>
            <person name="Schobel S."/>
            <person name="Town C.D."/>
        </authorList>
    </citation>
    <scope>GENOME REANNOTATION</scope>
    <source>
        <strain>cv. Columbia</strain>
    </source>
</reference>
<reference key="3">
    <citation type="journal article" date="2004" name="Genome Res.">
        <title>Whole genome sequence comparisons and 'full-length' cDNA sequences: a combined approach to evaluate and improve Arabidopsis genome annotation.</title>
        <authorList>
            <person name="Castelli V."/>
            <person name="Aury J.-M."/>
            <person name="Jaillon O."/>
            <person name="Wincker P."/>
            <person name="Clepet C."/>
            <person name="Menard M."/>
            <person name="Cruaud C."/>
            <person name="Quetier F."/>
            <person name="Scarpelli C."/>
            <person name="Schaechter V."/>
            <person name="Temple G."/>
            <person name="Caboche M."/>
            <person name="Weissenbach J."/>
            <person name="Salanoubat M."/>
        </authorList>
    </citation>
    <scope>NUCLEOTIDE SEQUENCE [LARGE SCALE MRNA]</scope>
    <source>
        <strain>cv. Columbia</strain>
    </source>
</reference>
<reference key="4">
    <citation type="journal article" date="2003" name="Plant Physiol.">
        <title>Diversity of the superfamily of phloem lectins (phloem protein 2) in angiosperms.</title>
        <authorList>
            <person name="Dinant S."/>
            <person name="Clark A.M."/>
            <person name="Zhu Y."/>
            <person name="Vilaine F."/>
            <person name="Palauqui J.-C."/>
            <person name="Kusiak C."/>
            <person name="Thompson G.A."/>
        </authorList>
    </citation>
    <scope>GENE FAMILY</scope>
    <scope>NOMENCLATURE</scope>
</reference>
<dbReference type="EMBL" id="AL132969">
    <property type="protein sequence ID" value="CAB86904.1"/>
    <property type="molecule type" value="Genomic_DNA"/>
</dbReference>
<dbReference type="EMBL" id="CP002686">
    <property type="protein sequence ID" value="AEE79024.1"/>
    <property type="molecule type" value="Genomic_DNA"/>
</dbReference>
<dbReference type="EMBL" id="BX823868">
    <property type="status" value="NOT_ANNOTATED_CDS"/>
    <property type="molecule type" value="mRNA"/>
</dbReference>
<dbReference type="PIR" id="T47557">
    <property type="entry name" value="T47557"/>
</dbReference>
<dbReference type="SMR" id="Q9LF92"/>
<dbReference type="FunCoup" id="Q9LF92">
    <property type="interactions" value="169"/>
</dbReference>
<dbReference type="STRING" id="3702.Q9LF92"/>
<dbReference type="PaxDb" id="3702-AT3G53000.1"/>
<dbReference type="ProteomicsDB" id="248694"/>
<dbReference type="EnsemblPlants" id="AT3G53000.1">
    <property type="protein sequence ID" value="AT3G53000.1"/>
    <property type="gene ID" value="AT3G53000"/>
</dbReference>
<dbReference type="Gramene" id="AT3G53000.1">
    <property type="protein sequence ID" value="AT3G53000.1"/>
    <property type="gene ID" value="AT3G53000"/>
</dbReference>
<dbReference type="KEGG" id="ath:AT3G53000"/>
<dbReference type="Araport" id="AT3G53000"/>
<dbReference type="TAIR" id="AT3G53000">
    <property type="gene designation" value="PP2-A15"/>
</dbReference>
<dbReference type="eggNOG" id="ENOG502QVTK">
    <property type="taxonomic scope" value="Eukaryota"/>
</dbReference>
<dbReference type="HOGENOM" id="CLU_050973_1_0_1"/>
<dbReference type="InParanoid" id="Q9LF92"/>
<dbReference type="OMA" id="HKRGYWI"/>
<dbReference type="PhylomeDB" id="Q9LF92"/>
<dbReference type="PRO" id="PR:Q9LF92"/>
<dbReference type="Proteomes" id="UP000006548">
    <property type="component" value="Chromosome 3"/>
</dbReference>
<dbReference type="ExpressionAtlas" id="Q9LF92">
    <property type="expression patterns" value="baseline and differential"/>
</dbReference>
<dbReference type="GO" id="GO:0030246">
    <property type="term" value="F:carbohydrate binding"/>
    <property type="evidence" value="ECO:0000250"/>
    <property type="project" value="TAIR"/>
</dbReference>
<dbReference type="CDD" id="cd22162">
    <property type="entry name" value="F-box_AtSKIP3-like"/>
    <property type="match status" value="1"/>
</dbReference>
<dbReference type="InterPro" id="IPR036047">
    <property type="entry name" value="F-box-like_dom_sf"/>
</dbReference>
<dbReference type="InterPro" id="IPR001810">
    <property type="entry name" value="F-box_dom"/>
</dbReference>
<dbReference type="InterPro" id="IPR025886">
    <property type="entry name" value="PP2-like"/>
</dbReference>
<dbReference type="PANTHER" id="PTHR31960">
    <property type="entry name" value="F-BOX PROTEIN PP2-A15"/>
    <property type="match status" value="1"/>
</dbReference>
<dbReference type="PANTHER" id="PTHR31960:SF2">
    <property type="entry name" value="F-BOX PROTEIN PP2-A15"/>
    <property type="match status" value="1"/>
</dbReference>
<dbReference type="Pfam" id="PF12937">
    <property type="entry name" value="F-box-like"/>
    <property type="match status" value="1"/>
</dbReference>
<dbReference type="Pfam" id="PF14299">
    <property type="entry name" value="PP2"/>
    <property type="match status" value="1"/>
</dbReference>
<dbReference type="SMART" id="SM00256">
    <property type="entry name" value="FBOX"/>
    <property type="match status" value="1"/>
</dbReference>
<dbReference type="SUPFAM" id="SSF81383">
    <property type="entry name" value="F-box domain"/>
    <property type="match status" value="1"/>
</dbReference>
<dbReference type="PROSITE" id="PS50181">
    <property type="entry name" value="FBOX"/>
    <property type="match status" value="1"/>
</dbReference>